<dbReference type="EMBL" id="AE016830">
    <property type="protein sequence ID" value="AAO80654.1"/>
    <property type="molecule type" value="Genomic_DNA"/>
</dbReference>
<dbReference type="RefSeq" id="NP_814584.1">
    <property type="nucleotide sequence ID" value="NC_004668.1"/>
</dbReference>
<dbReference type="RefSeq" id="WP_002379156.1">
    <property type="nucleotide sequence ID" value="NZ_KE136527.1"/>
</dbReference>
<dbReference type="STRING" id="226185.EF_0842"/>
<dbReference type="EnsemblBacteria" id="AAO80654">
    <property type="protein sequence ID" value="AAO80654"/>
    <property type="gene ID" value="EF_0842"/>
</dbReference>
<dbReference type="KEGG" id="efa:EF0842"/>
<dbReference type="PATRIC" id="fig|226185.46.peg.1248"/>
<dbReference type="eggNOG" id="COG1671">
    <property type="taxonomic scope" value="Bacteria"/>
</dbReference>
<dbReference type="HOGENOM" id="CLU_106619_0_0_9"/>
<dbReference type="Proteomes" id="UP000001415">
    <property type="component" value="Chromosome"/>
</dbReference>
<dbReference type="HAMAP" id="MF_00489">
    <property type="entry name" value="UPF0178"/>
    <property type="match status" value="1"/>
</dbReference>
<dbReference type="InterPro" id="IPR003791">
    <property type="entry name" value="UPF0178"/>
</dbReference>
<dbReference type="NCBIfam" id="NF001095">
    <property type="entry name" value="PRK00124.1"/>
    <property type="match status" value="1"/>
</dbReference>
<dbReference type="PANTHER" id="PTHR35146">
    <property type="entry name" value="UPF0178 PROTEIN YAII"/>
    <property type="match status" value="1"/>
</dbReference>
<dbReference type="PANTHER" id="PTHR35146:SF1">
    <property type="entry name" value="UPF0178 PROTEIN YAII"/>
    <property type="match status" value="1"/>
</dbReference>
<dbReference type="Pfam" id="PF02639">
    <property type="entry name" value="DUF188"/>
    <property type="match status" value="1"/>
</dbReference>
<proteinExistence type="inferred from homology"/>
<comment type="similarity">
    <text evidence="1">Belongs to the UPF0178 family.</text>
</comment>
<keyword id="KW-1185">Reference proteome</keyword>
<sequence>MKIFVDGDGSPVKETVIEVAVEKALDVVIVTSVDHYSLKDYPENVSFVYVDKGADAADFKIVQLIKKGDLLITQDYGLASLVLPKGVLVLHQLGYQYTKENIDGLLEQRYFSGQIRRKGGRTKGPKPFTDQDRTTFKQALIELVKRSL</sequence>
<reference key="1">
    <citation type="journal article" date="2003" name="Science">
        <title>Role of mobile DNA in the evolution of vancomycin-resistant Enterococcus faecalis.</title>
        <authorList>
            <person name="Paulsen I.T."/>
            <person name="Banerjei L."/>
            <person name="Myers G.S.A."/>
            <person name="Nelson K.E."/>
            <person name="Seshadri R."/>
            <person name="Read T.D."/>
            <person name="Fouts D.E."/>
            <person name="Eisen J.A."/>
            <person name="Gill S.R."/>
            <person name="Heidelberg J.F."/>
            <person name="Tettelin H."/>
            <person name="Dodson R.J."/>
            <person name="Umayam L.A."/>
            <person name="Brinkac L.M."/>
            <person name="Beanan M.J."/>
            <person name="Daugherty S.C."/>
            <person name="DeBoy R.T."/>
            <person name="Durkin S.A."/>
            <person name="Kolonay J.F."/>
            <person name="Madupu R."/>
            <person name="Nelson W.C."/>
            <person name="Vamathevan J.J."/>
            <person name="Tran B."/>
            <person name="Upton J."/>
            <person name="Hansen T."/>
            <person name="Shetty J."/>
            <person name="Khouri H.M."/>
            <person name="Utterback T.R."/>
            <person name="Radune D."/>
            <person name="Ketchum K.A."/>
            <person name="Dougherty B.A."/>
            <person name="Fraser C.M."/>
        </authorList>
    </citation>
    <scope>NUCLEOTIDE SEQUENCE [LARGE SCALE GENOMIC DNA]</scope>
    <source>
        <strain>ATCC 700802 / V583</strain>
    </source>
</reference>
<protein>
    <recommendedName>
        <fullName evidence="1">UPF0178 protein EF_0842</fullName>
    </recommendedName>
</protein>
<name>Y842_ENTFA</name>
<organism>
    <name type="scientific">Enterococcus faecalis (strain ATCC 700802 / V583)</name>
    <dbReference type="NCBI Taxonomy" id="226185"/>
    <lineage>
        <taxon>Bacteria</taxon>
        <taxon>Bacillati</taxon>
        <taxon>Bacillota</taxon>
        <taxon>Bacilli</taxon>
        <taxon>Lactobacillales</taxon>
        <taxon>Enterococcaceae</taxon>
        <taxon>Enterococcus</taxon>
    </lineage>
</organism>
<feature type="chain" id="PRO_0000175977" description="UPF0178 protein EF_0842">
    <location>
        <begin position="1"/>
        <end position="148"/>
    </location>
</feature>
<evidence type="ECO:0000255" key="1">
    <source>
        <dbReference type="HAMAP-Rule" id="MF_00489"/>
    </source>
</evidence>
<accession>Q837J5</accession>
<gene>
    <name type="ordered locus">EF_0842</name>
</gene>